<organism>
    <name type="scientific">Lactococcus lactis subsp. lactis (strain IL1403)</name>
    <name type="common">Streptococcus lactis</name>
    <dbReference type="NCBI Taxonomy" id="272623"/>
    <lineage>
        <taxon>Bacteria</taxon>
        <taxon>Bacillati</taxon>
        <taxon>Bacillota</taxon>
        <taxon>Bacilli</taxon>
        <taxon>Lactobacillales</taxon>
        <taxon>Streptococcaceae</taxon>
        <taxon>Lactococcus</taxon>
    </lineage>
</organism>
<comment type="function">
    <text evidence="1">Allows the formation of correctly charged Asn-tRNA(Asn) or Gln-tRNA(Gln) through the transamidation of misacylated Asp-tRNA(Asn) or Glu-tRNA(Gln) in organisms which lack either or both of asparaginyl-tRNA or glutaminyl-tRNA synthetases. The reaction takes place in the presence of glutamine and ATP through an activated phospho-Asp-tRNA(Asn) or phospho-Glu-tRNA(Gln) (By similarity).</text>
</comment>
<comment type="catalytic activity">
    <reaction>
        <text>L-glutamyl-tRNA(Gln) + L-glutamine + ATP + H2O = L-glutaminyl-tRNA(Gln) + L-glutamate + ADP + phosphate + H(+)</text>
        <dbReference type="Rhea" id="RHEA:17521"/>
        <dbReference type="Rhea" id="RHEA-COMP:9681"/>
        <dbReference type="Rhea" id="RHEA-COMP:9684"/>
        <dbReference type="ChEBI" id="CHEBI:15377"/>
        <dbReference type="ChEBI" id="CHEBI:15378"/>
        <dbReference type="ChEBI" id="CHEBI:29985"/>
        <dbReference type="ChEBI" id="CHEBI:30616"/>
        <dbReference type="ChEBI" id="CHEBI:43474"/>
        <dbReference type="ChEBI" id="CHEBI:58359"/>
        <dbReference type="ChEBI" id="CHEBI:78520"/>
        <dbReference type="ChEBI" id="CHEBI:78521"/>
        <dbReference type="ChEBI" id="CHEBI:456216"/>
    </reaction>
</comment>
<comment type="catalytic activity">
    <reaction>
        <text>L-aspartyl-tRNA(Asn) + L-glutamine + ATP + H2O = L-asparaginyl-tRNA(Asn) + L-glutamate + ADP + phosphate + 2 H(+)</text>
        <dbReference type="Rhea" id="RHEA:14513"/>
        <dbReference type="Rhea" id="RHEA-COMP:9674"/>
        <dbReference type="Rhea" id="RHEA-COMP:9677"/>
        <dbReference type="ChEBI" id="CHEBI:15377"/>
        <dbReference type="ChEBI" id="CHEBI:15378"/>
        <dbReference type="ChEBI" id="CHEBI:29985"/>
        <dbReference type="ChEBI" id="CHEBI:30616"/>
        <dbReference type="ChEBI" id="CHEBI:43474"/>
        <dbReference type="ChEBI" id="CHEBI:58359"/>
        <dbReference type="ChEBI" id="CHEBI:78515"/>
        <dbReference type="ChEBI" id="CHEBI:78516"/>
        <dbReference type="ChEBI" id="CHEBI:456216"/>
    </reaction>
</comment>
<comment type="subunit">
    <text evidence="1">Heterotrimer of A, B and C subunits.</text>
</comment>
<comment type="similarity">
    <text evidence="2">Belongs to the GatC family.</text>
</comment>
<sequence length="101" mass="11214">MSQITEEQVKHVALLSKLEFSENEVKSFTDTFGKIIDMVEMLDEVDGEGVPFTMNVADNLNFMREDVAEKGLDREKLMAAVPEKEDGFIKVPAMLSDGGDA</sequence>
<protein>
    <recommendedName>
        <fullName>Glutamyl-tRNA(Gln) amidotransferase subunit C</fullName>
        <shortName>Glu-ADT subunit C</shortName>
        <ecNumber>6.3.5.-</ecNumber>
    </recommendedName>
</protein>
<feature type="chain" id="PRO_0000105303" description="Glutamyl-tRNA(Gln) amidotransferase subunit C">
    <location>
        <begin position="1"/>
        <end position="101"/>
    </location>
</feature>
<name>GATC_LACLA</name>
<accession>Q9CJ44</accession>
<reference key="1">
    <citation type="journal article" date="2001" name="Genome Res.">
        <title>The complete genome sequence of the lactic acid bacterium Lactococcus lactis ssp. lactis IL1403.</title>
        <authorList>
            <person name="Bolotin A."/>
            <person name="Wincker P."/>
            <person name="Mauger S."/>
            <person name="Jaillon O."/>
            <person name="Malarme K."/>
            <person name="Weissenbach J."/>
            <person name="Ehrlich S.D."/>
            <person name="Sorokin A."/>
        </authorList>
    </citation>
    <scope>NUCLEOTIDE SEQUENCE [LARGE SCALE GENOMIC DNA]</scope>
    <source>
        <strain>IL1403</strain>
    </source>
</reference>
<gene>
    <name type="primary">gatC</name>
    <name type="ordered locus">LL0162</name>
    <name type="ORF">L0475</name>
</gene>
<keyword id="KW-0067">ATP-binding</keyword>
<keyword id="KW-0436">Ligase</keyword>
<keyword id="KW-0547">Nucleotide-binding</keyword>
<keyword id="KW-0648">Protein biosynthesis</keyword>
<keyword id="KW-1185">Reference proteome</keyword>
<dbReference type="EC" id="6.3.5.-"/>
<dbReference type="EMBL" id="AE005176">
    <property type="protein sequence ID" value="AAK04260.1"/>
    <property type="molecule type" value="Genomic_DNA"/>
</dbReference>
<dbReference type="PIR" id="B86645">
    <property type="entry name" value="B86645"/>
</dbReference>
<dbReference type="RefSeq" id="NP_266318.1">
    <property type="nucleotide sequence ID" value="NC_002662.1"/>
</dbReference>
<dbReference type="RefSeq" id="WP_010905163.1">
    <property type="nucleotide sequence ID" value="NC_002662.1"/>
</dbReference>
<dbReference type="SMR" id="Q9CJ44"/>
<dbReference type="PaxDb" id="272623-L0475"/>
<dbReference type="EnsemblBacteria" id="AAK04260">
    <property type="protein sequence ID" value="AAK04260"/>
    <property type="gene ID" value="L0475"/>
</dbReference>
<dbReference type="GeneID" id="89632302"/>
<dbReference type="KEGG" id="lla:L0475"/>
<dbReference type="PATRIC" id="fig|272623.7.peg.180"/>
<dbReference type="eggNOG" id="COG0721">
    <property type="taxonomic scope" value="Bacteria"/>
</dbReference>
<dbReference type="HOGENOM" id="CLU_105899_1_2_9"/>
<dbReference type="OrthoDB" id="9813938at2"/>
<dbReference type="Proteomes" id="UP000002196">
    <property type="component" value="Chromosome"/>
</dbReference>
<dbReference type="GO" id="GO:0050566">
    <property type="term" value="F:asparaginyl-tRNA synthase (glutamine-hydrolyzing) activity"/>
    <property type="evidence" value="ECO:0007669"/>
    <property type="project" value="RHEA"/>
</dbReference>
<dbReference type="GO" id="GO:0005524">
    <property type="term" value="F:ATP binding"/>
    <property type="evidence" value="ECO:0007669"/>
    <property type="project" value="UniProtKB-KW"/>
</dbReference>
<dbReference type="GO" id="GO:0050567">
    <property type="term" value="F:glutaminyl-tRNA synthase (glutamine-hydrolyzing) activity"/>
    <property type="evidence" value="ECO:0007669"/>
    <property type="project" value="UniProtKB-UniRule"/>
</dbReference>
<dbReference type="GO" id="GO:0070681">
    <property type="term" value="P:glutaminyl-tRNAGln biosynthesis via transamidation"/>
    <property type="evidence" value="ECO:0007669"/>
    <property type="project" value="TreeGrafter"/>
</dbReference>
<dbReference type="GO" id="GO:0006450">
    <property type="term" value="P:regulation of translational fidelity"/>
    <property type="evidence" value="ECO:0007669"/>
    <property type="project" value="InterPro"/>
</dbReference>
<dbReference type="GO" id="GO:0006412">
    <property type="term" value="P:translation"/>
    <property type="evidence" value="ECO:0007669"/>
    <property type="project" value="UniProtKB-UniRule"/>
</dbReference>
<dbReference type="Gene3D" id="1.10.20.60">
    <property type="entry name" value="Glu-tRNAGln amidotransferase C subunit, N-terminal domain"/>
    <property type="match status" value="1"/>
</dbReference>
<dbReference type="HAMAP" id="MF_00122">
    <property type="entry name" value="GatC"/>
    <property type="match status" value="1"/>
</dbReference>
<dbReference type="InterPro" id="IPR036113">
    <property type="entry name" value="Asp/Glu-ADT_sf_sub_c"/>
</dbReference>
<dbReference type="InterPro" id="IPR003837">
    <property type="entry name" value="GatC"/>
</dbReference>
<dbReference type="NCBIfam" id="TIGR00135">
    <property type="entry name" value="gatC"/>
    <property type="match status" value="1"/>
</dbReference>
<dbReference type="PANTHER" id="PTHR15004">
    <property type="entry name" value="GLUTAMYL-TRNA(GLN) AMIDOTRANSFERASE SUBUNIT C, MITOCHONDRIAL"/>
    <property type="match status" value="1"/>
</dbReference>
<dbReference type="PANTHER" id="PTHR15004:SF0">
    <property type="entry name" value="GLUTAMYL-TRNA(GLN) AMIDOTRANSFERASE SUBUNIT C, MITOCHONDRIAL"/>
    <property type="match status" value="1"/>
</dbReference>
<dbReference type="Pfam" id="PF02686">
    <property type="entry name" value="GatC"/>
    <property type="match status" value="1"/>
</dbReference>
<dbReference type="SUPFAM" id="SSF141000">
    <property type="entry name" value="Glu-tRNAGln amidotransferase C subunit"/>
    <property type="match status" value="1"/>
</dbReference>
<proteinExistence type="inferred from homology"/>
<evidence type="ECO:0000250" key="1"/>
<evidence type="ECO:0000305" key="2"/>